<reference key="1">
    <citation type="journal article" date="1996" name="DNA Res.">
        <title>A 570-kb DNA sequence of the Escherichia coli K-12 genome corresponding to the 28.0-40.1 min region on the linkage map.</title>
        <authorList>
            <person name="Aiba H."/>
            <person name="Baba T."/>
            <person name="Fujita K."/>
            <person name="Hayashi K."/>
            <person name="Inada T."/>
            <person name="Isono K."/>
            <person name="Itoh T."/>
            <person name="Kasai H."/>
            <person name="Kashimoto K."/>
            <person name="Kimura S."/>
            <person name="Kitakawa M."/>
            <person name="Kitagawa M."/>
            <person name="Makino K."/>
            <person name="Miki T."/>
            <person name="Mizobuchi K."/>
            <person name="Mori H."/>
            <person name="Mori T."/>
            <person name="Motomura K."/>
            <person name="Nakade S."/>
            <person name="Nakamura Y."/>
            <person name="Nashimoto H."/>
            <person name="Nishio Y."/>
            <person name="Oshima T."/>
            <person name="Saito N."/>
            <person name="Sampei G."/>
            <person name="Seki Y."/>
            <person name="Sivasundaram S."/>
            <person name="Tagami H."/>
            <person name="Takeda J."/>
            <person name="Takemoto K."/>
            <person name="Takeuchi Y."/>
            <person name="Wada C."/>
            <person name="Yamamoto Y."/>
            <person name="Horiuchi T."/>
        </authorList>
    </citation>
    <scope>NUCLEOTIDE SEQUENCE [LARGE SCALE GENOMIC DNA]</scope>
    <source>
        <strain>K12 / W3110 / ATCC 27325 / DSM 5911</strain>
    </source>
</reference>
<reference key="2">
    <citation type="journal article" date="1997" name="Science">
        <title>The complete genome sequence of Escherichia coli K-12.</title>
        <authorList>
            <person name="Blattner F.R."/>
            <person name="Plunkett G. III"/>
            <person name="Bloch C.A."/>
            <person name="Perna N.T."/>
            <person name="Burland V."/>
            <person name="Riley M."/>
            <person name="Collado-Vides J."/>
            <person name="Glasner J.D."/>
            <person name="Rode C.K."/>
            <person name="Mayhew G.F."/>
            <person name="Gregor J."/>
            <person name="Davis N.W."/>
            <person name="Kirkpatrick H.A."/>
            <person name="Goeden M.A."/>
            <person name="Rose D.J."/>
            <person name="Mau B."/>
            <person name="Shao Y."/>
        </authorList>
    </citation>
    <scope>NUCLEOTIDE SEQUENCE [LARGE SCALE GENOMIC DNA]</scope>
    <source>
        <strain>K12 / MG1655 / ATCC 47076</strain>
    </source>
</reference>
<reference key="3">
    <citation type="journal article" date="2006" name="Mol. Syst. Biol.">
        <title>Highly accurate genome sequences of Escherichia coli K-12 strains MG1655 and W3110.</title>
        <authorList>
            <person name="Hayashi K."/>
            <person name="Morooka N."/>
            <person name="Yamamoto Y."/>
            <person name="Fujita K."/>
            <person name="Isono K."/>
            <person name="Choi S."/>
            <person name="Ohtsubo E."/>
            <person name="Baba T."/>
            <person name="Wanner B.L."/>
            <person name="Mori H."/>
            <person name="Horiuchi T."/>
        </authorList>
    </citation>
    <scope>NUCLEOTIDE SEQUENCE [LARGE SCALE GENOMIC DNA]</scope>
    <source>
        <strain>K12 / W3110 / ATCC 27325 / DSM 5911</strain>
    </source>
</reference>
<accession>P0CF41</accession>
<accession>O07989</accession>
<accession>O08018</accession>
<accession>O08019</accession>
<accession>P0C5W2</accession>
<accession>P19776</accession>
<accession>P76357</accession>
<accession>P77346</accession>
<accession>Q2MBI5</accession>
<accession>Q2MC65</accession>
<accession>Q79BJ2</accession>
<accession>Q9JMT0</accession>
<protein>
    <recommendedName>
        <fullName>Transposase InsC for insertion element IS2D</fullName>
    </recommendedName>
</protein>
<comment type="function">
    <text>Involved in the transposition of the insertion sequence IS2.</text>
</comment>
<comment type="similarity">
    <text evidence="1">Belongs to the transposase 8 family.</text>
</comment>
<comment type="sequence caution" evidence="1">
    <conflict type="erroneous initiation">
        <sequence resource="EMBL-CDS" id="BAA15013"/>
    </conflict>
    <text>Extended N-terminus.</text>
</comment>
<organism>
    <name type="scientific">Escherichia coli (strain K12)</name>
    <dbReference type="NCBI Taxonomy" id="83333"/>
    <lineage>
        <taxon>Bacteria</taxon>
        <taxon>Pseudomonadati</taxon>
        <taxon>Pseudomonadota</taxon>
        <taxon>Gammaproteobacteria</taxon>
        <taxon>Enterobacterales</taxon>
        <taxon>Enterobacteriaceae</taxon>
        <taxon>Escherichia</taxon>
    </lineage>
</organism>
<name>INSC2_ECOLI</name>
<dbReference type="EMBL" id="U00096">
    <property type="protein sequence ID" value="AAC74485.2"/>
    <property type="molecule type" value="Genomic_DNA"/>
</dbReference>
<dbReference type="EMBL" id="AP009048">
    <property type="protein sequence ID" value="BAA15013.1"/>
    <property type="status" value="ALT_INIT"/>
    <property type="molecule type" value="Genomic_DNA"/>
</dbReference>
<dbReference type="PIR" id="B65240">
    <property type="entry name" value="B65240"/>
</dbReference>
<dbReference type="RefSeq" id="NP_415921.2">
    <property type="nucleotide sequence ID" value="NC_000913.3"/>
</dbReference>
<dbReference type="SMR" id="P0CF41"/>
<dbReference type="FunCoup" id="P0CF41">
    <property type="interactions" value="52"/>
</dbReference>
<dbReference type="jPOST" id="P0CF41"/>
<dbReference type="EnsemblBacteria" id="AAC74485">
    <property type="protein sequence ID" value="AAC74485"/>
    <property type="gene ID" value="b1403"/>
</dbReference>
<dbReference type="GeneID" id="945967"/>
<dbReference type="KEGG" id="ecj:JW1400"/>
<dbReference type="KEGG" id="eco:b0360"/>
<dbReference type="KEGG" id="eco:b1403"/>
<dbReference type="KEGG" id="eco:b1997"/>
<dbReference type="KEGG" id="eco:b2861"/>
<dbReference type="KEGG" id="eco:b3044"/>
<dbReference type="KEGG" id="eco:b4272"/>
<dbReference type="KEGG" id="ecoc:C3026_00670"/>
<dbReference type="KEGG" id="ecoc:C3026_03840"/>
<dbReference type="KEGG" id="ecoc:C3026_06235"/>
<dbReference type="KEGG" id="ecoc:C3026_08180"/>
<dbReference type="KEGG" id="ecoc:C3026_09100"/>
<dbReference type="KEGG" id="ecoc:C3026_11265"/>
<dbReference type="KEGG" id="ecoc:C3026_15305"/>
<dbReference type="KEGG" id="ecoc:C3026_15700"/>
<dbReference type="KEGG" id="ecoc:C3026_16625"/>
<dbReference type="KEGG" id="ecoc:C3026_20340"/>
<dbReference type="KEGG" id="ecoc:C3026_23040"/>
<dbReference type="KEGG" id="ecoc:C3026_24220"/>
<dbReference type="EchoBASE" id="EB4725"/>
<dbReference type="HOGENOM" id="CLU_027402_25_0_6"/>
<dbReference type="InParanoid" id="P0CF41"/>
<dbReference type="PhylomeDB" id="P0CF41"/>
<dbReference type="BioCyc" id="EcoCyc:MONOMER0-4250"/>
<dbReference type="PRO" id="PR:P0CF41"/>
<dbReference type="Proteomes" id="UP000000625">
    <property type="component" value="Chromosome"/>
</dbReference>
<dbReference type="GO" id="GO:0003677">
    <property type="term" value="F:DNA binding"/>
    <property type="evidence" value="ECO:0007669"/>
    <property type="project" value="UniProtKB-KW"/>
</dbReference>
<dbReference type="GO" id="GO:0004803">
    <property type="term" value="F:transposase activity"/>
    <property type="evidence" value="ECO:0007669"/>
    <property type="project" value="InterPro"/>
</dbReference>
<dbReference type="GO" id="GO:0006313">
    <property type="term" value="P:DNA transposition"/>
    <property type="evidence" value="ECO:0007669"/>
    <property type="project" value="InterPro"/>
</dbReference>
<dbReference type="Gene3D" id="1.10.10.10">
    <property type="entry name" value="Winged helix-like DNA-binding domain superfamily/Winged helix DNA-binding domain"/>
    <property type="match status" value="1"/>
</dbReference>
<dbReference type="InterPro" id="IPR009057">
    <property type="entry name" value="Homeodomain-like_sf"/>
</dbReference>
<dbReference type="InterPro" id="IPR002514">
    <property type="entry name" value="Transposase_8"/>
</dbReference>
<dbReference type="InterPro" id="IPR036388">
    <property type="entry name" value="WH-like_DNA-bd_sf"/>
</dbReference>
<dbReference type="NCBIfam" id="NF006928">
    <property type="entry name" value="PRK09413.1"/>
    <property type="match status" value="1"/>
</dbReference>
<dbReference type="PANTHER" id="PTHR37936">
    <property type="entry name" value="TRANSPOSASE INSC FOR INSERTION ELEMENT IS2A-RELATED"/>
    <property type="match status" value="1"/>
</dbReference>
<dbReference type="PANTHER" id="PTHR37936:SF3">
    <property type="entry name" value="TRANSPOSASE INSC FOR INSERTION ELEMENT IS2A-RELATED"/>
    <property type="match status" value="1"/>
</dbReference>
<dbReference type="Pfam" id="PF01527">
    <property type="entry name" value="HTH_Tnp_1"/>
    <property type="match status" value="1"/>
</dbReference>
<dbReference type="SUPFAM" id="SSF46689">
    <property type="entry name" value="Homeodomain-like"/>
    <property type="match status" value="1"/>
</dbReference>
<evidence type="ECO:0000305" key="1"/>
<sequence length="121" mass="13452">MIDVLGPEKRRRRTTQEKIAIVQQSFEPGMTVSLVARQHGVAASQLFLWRKQYQEGSLTAVAAGEQVVPASELAAAMKQIKELQRLLGKKTMENELLKEAVEYGRAKKWIAHAPLLPGDGE</sequence>
<gene>
    <name type="primary">insC2</name>
    <name type="ordered locus">b1403</name>
    <name type="ordered locus">JW1400</name>
</gene>
<feature type="chain" id="PRO_0000393449" description="Transposase InsC for insertion element IS2D">
    <location>
        <begin position="1"/>
        <end position="121"/>
    </location>
</feature>
<keyword id="KW-0233">DNA recombination</keyword>
<keyword id="KW-0238">DNA-binding</keyword>
<keyword id="KW-1185">Reference proteome</keyword>
<keyword id="KW-0814">Transposable element</keyword>
<keyword id="KW-0815">Transposition</keyword>
<proteinExistence type="inferred from homology"/>